<feature type="chain" id="PRO_1000058643" description="Uroporphyrinogen decarboxylase">
    <location>
        <begin position="1"/>
        <end position="354"/>
    </location>
</feature>
<feature type="binding site" evidence="1">
    <location>
        <begin position="27"/>
        <end position="31"/>
    </location>
    <ligand>
        <name>substrate</name>
    </ligand>
</feature>
<feature type="binding site" evidence="1">
    <location>
        <position position="77"/>
    </location>
    <ligand>
        <name>substrate</name>
    </ligand>
</feature>
<feature type="binding site" evidence="1">
    <location>
        <position position="154"/>
    </location>
    <ligand>
        <name>substrate</name>
    </ligand>
</feature>
<feature type="binding site" evidence="1">
    <location>
        <position position="209"/>
    </location>
    <ligand>
        <name>substrate</name>
    </ligand>
</feature>
<feature type="binding site" evidence="1">
    <location>
        <position position="327"/>
    </location>
    <ligand>
        <name>substrate</name>
    </ligand>
</feature>
<feature type="site" description="Transition state stabilizer" evidence="1">
    <location>
        <position position="77"/>
    </location>
</feature>
<reference key="1">
    <citation type="submission" date="2006-03" db="EMBL/GenBank/DDBJ databases">
        <title>Complete sequence of Methylobacillus flagellatus KT.</title>
        <authorList>
            <consortium name="US DOE Joint Genome Institute"/>
            <person name="Copeland A."/>
            <person name="Lucas S."/>
            <person name="Lapidus A."/>
            <person name="Barry K."/>
            <person name="Detter J.C."/>
            <person name="Glavina del Rio T."/>
            <person name="Hammon N."/>
            <person name="Israni S."/>
            <person name="Dalin E."/>
            <person name="Tice H."/>
            <person name="Pitluck S."/>
            <person name="Brettin T."/>
            <person name="Bruce D."/>
            <person name="Han C."/>
            <person name="Tapia R."/>
            <person name="Saunders E."/>
            <person name="Gilna P."/>
            <person name="Schmutz J."/>
            <person name="Larimer F."/>
            <person name="Land M."/>
            <person name="Kyrpides N."/>
            <person name="Anderson I."/>
            <person name="Richardson P."/>
        </authorList>
    </citation>
    <scope>NUCLEOTIDE SEQUENCE [LARGE SCALE GENOMIC DNA]</scope>
    <source>
        <strain>ATCC 51484 / DSM 6875 / VKM B-1610 / KT</strain>
    </source>
</reference>
<evidence type="ECO:0000255" key="1">
    <source>
        <dbReference type="HAMAP-Rule" id="MF_00218"/>
    </source>
</evidence>
<sequence>MTSLKNDVFLRALQRQRTPYTPVWMMRQAGRYLPEYRETRKKAGSFMDLCKNTDLATEVTLQPLDRFPLDAAILFSDILTIPDAMGLGLYFEEGEGPKFERTLREESDIRKLAVPDIGSELRYVTDAVSQIRRALDGRVPLIGFSGSPWTLATYMVEGRGGTDFLTIKQMAYARPDLLHHILSVTAQAVTAYLNAQIAAGAQAVMIFDSWGGALSHYAYQEFSLQYMQQIVSGLTKESEGRVVPSIVFTKGGGLWLESQAETGADALGLDWTISLGEARKRVGSKVALQGNMDPAILLSTPEAVEKEVARILADYGIGNGHVFNLGHGITQFTPHENAEAMIKAVHAISSKYHL</sequence>
<comment type="function">
    <text evidence="1">Catalyzes the decarboxylation of four acetate groups of uroporphyrinogen-III to yield coproporphyrinogen-III.</text>
</comment>
<comment type="catalytic activity">
    <reaction evidence="1">
        <text>uroporphyrinogen III + 4 H(+) = coproporphyrinogen III + 4 CO2</text>
        <dbReference type="Rhea" id="RHEA:19865"/>
        <dbReference type="ChEBI" id="CHEBI:15378"/>
        <dbReference type="ChEBI" id="CHEBI:16526"/>
        <dbReference type="ChEBI" id="CHEBI:57308"/>
        <dbReference type="ChEBI" id="CHEBI:57309"/>
        <dbReference type="EC" id="4.1.1.37"/>
    </reaction>
</comment>
<comment type="pathway">
    <text evidence="1">Porphyrin-containing compound metabolism; protoporphyrin-IX biosynthesis; coproporphyrinogen-III from 5-aminolevulinate: step 4/4.</text>
</comment>
<comment type="subunit">
    <text evidence="1">Homodimer.</text>
</comment>
<comment type="subcellular location">
    <subcellularLocation>
        <location evidence="1">Cytoplasm</location>
    </subcellularLocation>
</comment>
<comment type="similarity">
    <text evidence="1">Belongs to the uroporphyrinogen decarboxylase family.</text>
</comment>
<dbReference type="EC" id="4.1.1.37" evidence="1"/>
<dbReference type="EMBL" id="CP000284">
    <property type="protein sequence ID" value="ABE50929.1"/>
    <property type="molecule type" value="Genomic_DNA"/>
</dbReference>
<dbReference type="RefSeq" id="WP_011480882.1">
    <property type="nucleotide sequence ID" value="NC_007947.1"/>
</dbReference>
<dbReference type="SMR" id="Q1GXV8"/>
<dbReference type="STRING" id="265072.Mfla_2666"/>
<dbReference type="KEGG" id="mfa:Mfla_2666"/>
<dbReference type="eggNOG" id="COG0407">
    <property type="taxonomic scope" value="Bacteria"/>
</dbReference>
<dbReference type="HOGENOM" id="CLU_040933_0_0_4"/>
<dbReference type="OrthoDB" id="9806656at2"/>
<dbReference type="UniPathway" id="UPA00251">
    <property type="reaction ID" value="UER00321"/>
</dbReference>
<dbReference type="Proteomes" id="UP000002440">
    <property type="component" value="Chromosome"/>
</dbReference>
<dbReference type="GO" id="GO:0005829">
    <property type="term" value="C:cytosol"/>
    <property type="evidence" value="ECO:0007669"/>
    <property type="project" value="TreeGrafter"/>
</dbReference>
<dbReference type="GO" id="GO:0004853">
    <property type="term" value="F:uroporphyrinogen decarboxylase activity"/>
    <property type="evidence" value="ECO:0007669"/>
    <property type="project" value="UniProtKB-UniRule"/>
</dbReference>
<dbReference type="GO" id="GO:0019353">
    <property type="term" value="P:protoporphyrinogen IX biosynthetic process from glutamate"/>
    <property type="evidence" value="ECO:0007669"/>
    <property type="project" value="TreeGrafter"/>
</dbReference>
<dbReference type="CDD" id="cd00717">
    <property type="entry name" value="URO-D"/>
    <property type="match status" value="1"/>
</dbReference>
<dbReference type="FunFam" id="3.20.20.210:FF:000001">
    <property type="entry name" value="Uroporphyrinogen decarboxylase"/>
    <property type="match status" value="1"/>
</dbReference>
<dbReference type="Gene3D" id="3.20.20.210">
    <property type="match status" value="1"/>
</dbReference>
<dbReference type="HAMAP" id="MF_00218">
    <property type="entry name" value="URO_D"/>
    <property type="match status" value="1"/>
</dbReference>
<dbReference type="InterPro" id="IPR038071">
    <property type="entry name" value="UROD/MetE-like_sf"/>
</dbReference>
<dbReference type="InterPro" id="IPR006361">
    <property type="entry name" value="Uroporphyrinogen_deCO2ase_HemE"/>
</dbReference>
<dbReference type="InterPro" id="IPR000257">
    <property type="entry name" value="Uroporphyrinogen_deCOase"/>
</dbReference>
<dbReference type="NCBIfam" id="TIGR01464">
    <property type="entry name" value="hemE"/>
    <property type="match status" value="1"/>
</dbReference>
<dbReference type="PANTHER" id="PTHR21091">
    <property type="entry name" value="METHYLTETRAHYDROFOLATE:HOMOCYSTEINE METHYLTRANSFERASE RELATED"/>
    <property type="match status" value="1"/>
</dbReference>
<dbReference type="PANTHER" id="PTHR21091:SF169">
    <property type="entry name" value="UROPORPHYRINOGEN DECARBOXYLASE"/>
    <property type="match status" value="1"/>
</dbReference>
<dbReference type="Pfam" id="PF01208">
    <property type="entry name" value="URO-D"/>
    <property type="match status" value="1"/>
</dbReference>
<dbReference type="SUPFAM" id="SSF51726">
    <property type="entry name" value="UROD/MetE-like"/>
    <property type="match status" value="1"/>
</dbReference>
<dbReference type="PROSITE" id="PS00906">
    <property type="entry name" value="UROD_1"/>
    <property type="match status" value="1"/>
</dbReference>
<dbReference type="PROSITE" id="PS00907">
    <property type="entry name" value="UROD_2"/>
    <property type="match status" value="1"/>
</dbReference>
<proteinExistence type="inferred from homology"/>
<protein>
    <recommendedName>
        <fullName evidence="1">Uroporphyrinogen decarboxylase</fullName>
        <shortName evidence="1">UPD</shortName>
        <shortName evidence="1">URO-D</shortName>
        <ecNumber evidence="1">4.1.1.37</ecNumber>
    </recommendedName>
</protein>
<gene>
    <name evidence="1" type="primary">hemE</name>
    <name type="ordered locus">Mfla_2666</name>
</gene>
<name>DCUP_METFK</name>
<keyword id="KW-0963">Cytoplasm</keyword>
<keyword id="KW-0210">Decarboxylase</keyword>
<keyword id="KW-0456">Lyase</keyword>
<keyword id="KW-0627">Porphyrin biosynthesis</keyword>
<keyword id="KW-1185">Reference proteome</keyword>
<accession>Q1GXV8</accession>
<organism>
    <name type="scientific">Methylobacillus flagellatus (strain ATCC 51484 / DSM 6875 / VKM B-1610 / KT)</name>
    <dbReference type="NCBI Taxonomy" id="265072"/>
    <lineage>
        <taxon>Bacteria</taxon>
        <taxon>Pseudomonadati</taxon>
        <taxon>Pseudomonadota</taxon>
        <taxon>Betaproteobacteria</taxon>
        <taxon>Nitrosomonadales</taxon>
        <taxon>Methylophilaceae</taxon>
        <taxon>Methylobacillus</taxon>
    </lineage>
</organism>